<dbReference type="EMBL" id="CP000721">
    <property type="protein sequence ID" value="ABR33749.1"/>
    <property type="molecule type" value="Genomic_DNA"/>
</dbReference>
<dbReference type="RefSeq" id="WP_011968901.1">
    <property type="nucleotide sequence ID" value="NC_009617.1"/>
</dbReference>
<dbReference type="SMR" id="A6LTR9"/>
<dbReference type="GeneID" id="66344543"/>
<dbReference type="KEGG" id="cbe:Cbei_1575"/>
<dbReference type="eggNOG" id="COG2001">
    <property type="taxonomic scope" value="Bacteria"/>
</dbReference>
<dbReference type="HOGENOM" id="CLU_107907_0_5_9"/>
<dbReference type="Proteomes" id="UP000000565">
    <property type="component" value="Chromosome"/>
</dbReference>
<dbReference type="GO" id="GO:0005737">
    <property type="term" value="C:cytoplasm"/>
    <property type="evidence" value="ECO:0007669"/>
    <property type="project" value="UniProtKB-UniRule"/>
</dbReference>
<dbReference type="GO" id="GO:0009295">
    <property type="term" value="C:nucleoid"/>
    <property type="evidence" value="ECO:0007669"/>
    <property type="project" value="UniProtKB-SubCell"/>
</dbReference>
<dbReference type="GO" id="GO:0003700">
    <property type="term" value="F:DNA-binding transcription factor activity"/>
    <property type="evidence" value="ECO:0007669"/>
    <property type="project" value="UniProtKB-UniRule"/>
</dbReference>
<dbReference type="GO" id="GO:0000976">
    <property type="term" value="F:transcription cis-regulatory region binding"/>
    <property type="evidence" value="ECO:0007669"/>
    <property type="project" value="TreeGrafter"/>
</dbReference>
<dbReference type="GO" id="GO:2000143">
    <property type="term" value="P:negative regulation of DNA-templated transcription initiation"/>
    <property type="evidence" value="ECO:0007669"/>
    <property type="project" value="TreeGrafter"/>
</dbReference>
<dbReference type="CDD" id="cd16321">
    <property type="entry name" value="MraZ_C"/>
    <property type="match status" value="1"/>
</dbReference>
<dbReference type="CDD" id="cd16320">
    <property type="entry name" value="MraZ_N"/>
    <property type="match status" value="1"/>
</dbReference>
<dbReference type="FunFam" id="3.40.1550.20:FF:000002">
    <property type="entry name" value="Transcriptional regulator MraZ"/>
    <property type="match status" value="1"/>
</dbReference>
<dbReference type="Gene3D" id="3.40.1550.20">
    <property type="entry name" value="Transcriptional regulator MraZ domain"/>
    <property type="match status" value="1"/>
</dbReference>
<dbReference type="HAMAP" id="MF_01008">
    <property type="entry name" value="MraZ"/>
    <property type="match status" value="1"/>
</dbReference>
<dbReference type="InterPro" id="IPR003444">
    <property type="entry name" value="MraZ"/>
</dbReference>
<dbReference type="InterPro" id="IPR035644">
    <property type="entry name" value="MraZ_C"/>
</dbReference>
<dbReference type="InterPro" id="IPR020603">
    <property type="entry name" value="MraZ_dom"/>
</dbReference>
<dbReference type="InterPro" id="IPR035642">
    <property type="entry name" value="MraZ_N"/>
</dbReference>
<dbReference type="InterPro" id="IPR038619">
    <property type="entry name" value="MraZ_sf"/>
</dbReference>
<dbReference type="InterPro" id="IPR007159">
    <property type="entry name" value="SpoVT-AbrB_dom"/>
</dbReference>
<dbReference type="InterPro" id="IPR037914">
    <property type="entry name" value="SpoVT-AbrB_sf"/>
</dbReference>
<dbReference type="NCBIfam" id="TIGR00242">
    <property type="entry name" value="division/cell wall cluster transcriptional repressor MraZ"/>
    <property type="match status" value="1"/>
</dbReference>
<dbReference type="PANTHER" id="PTHR34701">
    <property type="entry name" value="TRANSCRIPTIONAL REGULATOR MRAZ"/>
    <property type="match status" value="1"/>
</dbReference>
<dbReference type="PANTHER" id="PTHR34701:SF1">
    <property type="entry name" value="TRANSCRIPTIONAL REGULATOR MRAZ"/>
    <property type="match status" value="1"/>
</dbReference>
<dbReference type="Pfam" id="PF02381">
    <property type="entry name" value="MraZ"/>
    <property type="match status" value="2"/>
</dbReference>
<dbReference type="SUPFAM" id="SSF89447">
    <property type="entry name" value="AbrB/MazE/MraZ-like"/>
    <property type="match status" value="1"/>
</dbReference>
<dbReference type="PROSITE" id="PS51740">
    <property type="entry name" value="SPOVT_ABRB"/>
    <property type="match status" value="2"/>
</dbReference>
<sequence length="142" mass="16260">MFIGEYQHALDPKNRIIVPAKLRDGLGNKFVITKGLDGCLYAYPLDEWRILEDKLKTLPLTNKDARSFVRFFFSGACEVELDKQGRGLIPQNLKEYAGIEKDIVSIGVLSRVEIWSKEKWSEYNESNIDFDSIAEKMNDLGI</sequence>
<proteinExistence type="inferred from homology"/>
<accession>A6LTR9</accession>
<protein>
    <recommendedName>
        <fullName>Transcriptional regulator MraZ</fullName>
    </recommendedName>
</protein>
<evidence type="ECO:0000255" key="1">
    <source>
        <dbReference type="HAMAP-Rule" id="MF_01008"/>
    </source>
</evidence>
<evidence type="ECO:0000255" key="2">
    <source>
        <dbReference type="PROSITE-ProRule" id="PRU01076"/>
    </source>
</evidence>
<reference key="1">
    <citation type="submission" date="2007-06" db="EMBL/GenBank/DDBJ databases">
        <title>Complete sequence of Clostridium beijerinckii NCIMB 8052.</title>
        <authorList>
            <consortium name="US DOE Joint Genome Institute"/>
            <person name="Copeland A."/>
            <person name="Lucas S."/>
            <person name="Lapidus A."/>
            <person name="Barry K."/>
            <person name="Detter J.C."/>
            <person name="Glavina del Rio T."/>
            <person name="Hammon N."/>
            <person name="Israni S."/>
            <person name="Dalin E."/>
            <person name="Tice H."/>
            <person name="Pitluck S."/>
            <person name="Sims D."/>
            <person name="Brettin T."/>
            <person name="Bruce D."/>
            <person name="Tapia R."/>
            <person name="Brainard J."/>
            <person name="Schmutz J."/>
            <person name="Larimer F."/>
            <person name="Land M."/>
            <person name="Hauser L."/>
            <person name="Kyrpides N."/>
            <person name="Mikhailova N."/>
            <person name="Bennet G."/>
            <person name="Cann I."/>
            <person name="Chen J.-S."/>
            <person name="Contreras A.L."/>
            <person name="Jones D."/>
            <person name="Kashket E."/>
            <person name="Mitchell W."/>
            <person name="Stoddard S."/>
            <person name="Schwarz W."/>
            <person name="Qureshi N."/>
            <person name="Young M."/>
            <person name="Shi Z."/>
            <person name="Ezeji T."/>
            <person name="White B."/>
            <person name="Blaschek H."/>
            <person name="Richardson P."/>
        </authorList>
    </citation>
    <scope>NUCLEOTIDE SEQUENCE [LARGE SCALE GENOMIC DNA]</scope>
    <source>
        <strain>ATCC 51743 / NCIMB 8052</strain>
    </source>
</reference>
<gene>
    <name evidence="1" type="primary">mraZ</name>
    <name type="ordered locus">Cbei_1575</name>
</gene>
<comment type="subunit">
    <text evidence="1">Forms oligomers.</text>
</comment>
<comment type="subcellular location">
    <subcellularLocation>
        <location evidence="1">Cytoplasm</location>
        <location evidence="1">Nucleoid</location>
    </subcellularLocation>
</comment>
<comment type="similarity">
    <text evidence="1">Belongs to the MraZ family.</text>
</comment>
<organism>
    <name type="scientific">Clostridium beijerinckii (strain ATCC 51743 / NCIMB 8052)</name>
    <name type="common">Clostridium acetobutylicum</name>
    <dbReference type="NCBI Taxonomy" id="290402"/>
    <lineage>
        <taxon>Bacteria</taxon>
        <taxon>Bacillati</taxon>
        <taxon>Bacillota</taxon>
        <taxon>Clostridia</taxon>
        <taxon>Eubacteriales</taxon>
        <taxon>Clostridiaceae</taxon>
        <taxon>Clostridium</taxon>
    </lineage>
</organism>
<feature type="chain" id="PRO_1000083999" description="Transcriptional regulator MraZ">
    <location>
        <begin position="1"/>
        <end position="142"/>
    </location>
</feature>
<feature type="domain" description="SpoVT-AbrB 1" evidence="2">
    <location>
        <begin position="5"/>
        <end position="47"/>
    </location>
</feature>
<feature type="domain" description="SpoVT-AbrB 2" evidence="2">
    <location>
        <begin position="76"/>
        <end position="119"/>
    </location>
</feature>
<keyword id="KW-0963">Cytoplasm</keyword>
<keyword id="KW-0238">DNA-binding</keyword>
<keyword id="KW-0677">Repeat</keyword>
<keyword id="KW-0804">Transcription</keyword>
<keyword id="KW-0805">Transcription regulation</keyword>
<name>MRAZ_CLOB8</name>